<dbReference type="EC" id="1.1.1.105" evidence="4"/>
<dbReference type="EMBL" id="X90710">
    <property type="protein sequence ID" value="CAA62241.1"/>
    <property type="molecule type" value="mRNA"/>
</dbReference>
<dbReference type="PIR" id="S66286">
    <property type="entry name" value="S66286"/>
</dbReference>
<dbReference type="SMR" id="Q64563"/>
<dbReference type="FunCoup" id="Q64563">
    <property type="interactions" value="7"/>
</dbReference>
<dbReference type="CarbonylDB" id="Q64563"/>
<dbReference type="GlyGen" id="Q64563">
    <property type="glycosylation" value="1 site"/>
</dbReference>
<dbReference type="PhosphoSitePlus" id="Q64563"/>
<dbReference type="PaxDb" id="10116-ENSRNOP00000016891"/>
<dbReference type="AGR" id="RGD:71028"/>
<dbReference type="RGD" id="71028">
    <property type="gene designation" value="Adh4"/>
</dbReference>
<dbReference type="eggNOG" id="KOG0022">
    <property type="taxonomic scope" value="Eukaryota"/>
</dbReference>
<dbReference type="InParanoid" id="Q64563"/>
<dbReference type="Reactome" id="R-RNO-5365859">
    <property type="pathway name" value="RA biosynthesis pathway"/>
</dbReference>
<dbReference type="Reactome" id="R-RNO-71384">
    <property type="pathway name" value="Ethanol oxidation"/>
</dbReference>
<dbReference type="PRO" id="PR:Q64563"/>
<dbReference type="Proteomes" id="UP000002494">
    <property type="component" value="Unplaced"/>
</dbReference>
<dbReference type="GO" id="GO:0005829">
    <property type="term" value="C:cytosol"/>
    <property type="evidence" value="ECO:0000318"/>
    <property type="project" value="GO_Central"/>
</dbReference>
<dbReference type="GO" id="GO:0004022">
    <property type="term" value="F:alcohol dehydrogenase (NAD+) activity"/>
    <property type="evidence" value="ECO:0000266"/>
    <property type="project" value="RGD"/>
</dbReference>
<dbReference type="GO" id="GO:0004032">
    <property type="term" value="F:aldose reductase (NADPH) activity"/>
    <property type="evidence" value="ECO:0000266"/>
    <property type="project" value="RGD"/>
</dbReference>
<dbReference type="GO" id="GO:0005503">
    <property type="term" value="F:all-trans retinal binding"/>
    <property type="evidence" value="ECO:0000266"/>
    <property type="project" value="RGD"/>
</dbReference>
<dbReference type="GO" id="GO:0004745">
    <property type="term" value="F:all-trans-retinol dehydrogenase (NAD+) activity"/>
    <property type="evidence" value="ECO:0000250"/>
    <property type="project" value="UniProtKB"/>
</dbReference>
<dbReference type="GO" id="GO:0018479">
    <property type="term" value="F:benzaldehyde dehydrogenase (NAD+) activity"/>
    <property type="evidence" value="ECO:0000266"/>
    <property type="project" value="RGD"/>
</dbReference>
<dbReference type="GO" id="GO:0051287">
    <property type="term" value="F:NAD binding"/>
    <property type="evidence" value="ECO:0000266"/>
    <property type="project" value="RGD"/>
</dbReference>
<dbReference type="GO" id="GO:0003960">
    <property type="term" value="F:NADPH:quinone reductase activity"/>
    <property type="evidence" value="ECO:0000266"/>
    <property type="project" value="RGD"/>
</dbReference>
<dbReference type="GO" id="GO:0019841">
    <property type="term" value="F:retinol binding"/>
    <property type="evidence" value="ECO:0000266"/>
    <property type="project" value="RGD"/>
</dbReference>
<dbReference type="GO" id="GO:0051903">
    <property type="term" value="F:S-(hydroxymethyl)glutathione dehydrogenase [NAD(P)+] activity"/>
    <property type="evidence" value="ECO:0000318"/>
    <property type="project" value="GO_Central"/>
</dbReference>
<dbReference type="GO" id="GO:0008270">
    <property type="term" value="F:zinc ion binding"/>
    <property type="evidence" value="ECO:0000266"/>
    <property type="project" value="RGD"/>
</dbReference>
<dbReference type="GO" id="GO:0046164">
    <property type="term" value="P:alcohol catabolic process"/>
    <property type="evidence" value="ECO:0000266"/>
    <property type="project" value="RGD"/>
</dbReference>
<dbReference type="GO" id="GO:0006066">
    <property type="term" value="P:alcohol metabolic process"/>
    <property type="evidence" value="ECO:0000266"/>
    <property type="project" value="RGD"/>
</dbReference>
<dbReference type="GO" id="GO:0006081">
    <property type="term" value="P:aldehyde metabolic process"/>
    <property type="evidence" value="ECO:0000266"/>
    <property type="project" value="RGD"/>
</dbReference>
<dbReference type="GO" id="GO:0006067">
    <property type="term" value="P:ethanol metabolic process"/>
    <property type="evidence" value="ECO:0000266"/>
    <property type="project" value="RGD"/>
</dbReference>
<dbReference type="GO" id="GO:0010430">
    <property type="term" value="P:fatty acid omega-oxidation"/>
    <property type="evidence" value="ECO:0000250"/>
    <property type="project" value="UniProtKB"/>
</dbReference>
<dbReference type="GO" id="GO:0046294">
    <property type="term" value="P:formaldehyde catabolic process"/>
    <property type="evidence" value="ECO:0000318"/>
    <property type="project" value="GO_Central"/>
</dbReference>
<dbReference type="GO" id="GO:0042698">
    <property type="term" value="P:ovulation cycle"/>
    <property type="evidence" value="ECO:0000270"/>
    <property type="project" value="RGD"/>
</dbReference>
<dbReference type="GO" id="GO:1901661">
    <property type="term" value="P:quinone metabolic process"/>
    <property type="evidence" value="ECO:0000266"/>
    <property type="project" value="RGD"/>
</dbReference>
<dbReference type="GO" id="GO:0045471">
    <property type="term" value="P:response to ethanol"/>
    <property type="evidence" value="ECO:0000270"/>
    <property type="project" value="RGD"/>
</dbReference>
<dbReference type="GO" id="GO:0001523">
    <property type="term" value="P:retinoid metabolic process"/>
    <property type="evidence" value="ECO:0000266"/>
    <property type="project" value="RGD"/>
</dbReference>
<dbReference type="GO" id="GO:0042572">
    <property type="term" value="P:retinol metabolic process"/>
    <property type="evidence" value="ECO:0000250"/>
    <property type="project" value="UniProtKB"/>
</dbReference>
<dbReference type="CDD" id="cd08299">
    <property type="entry name" value="alcohol_DH_class_I_II_IV"/>
    <property type="match status" value="1"/>
</dbReference>
<dbReference type="FunFam" id="3.90.180.10:FF:000067">
    <property type="entry name" value="alcohol dehydrogenase 1-like isoform X1"/>
    <property type="match status" value="1"/>
</dbReference>
<dbReference type="FunFam" id="3.40.50.720:FF:000003">
    <property type="entry name" value="S-(hydroxymethyl)glutathione dehydrogenase"/>
    <property type="match status" value="1"/>
</dbReference>
<dbReference type="Gene3D" id="3.90.180.10">
    <property type="entry name" value="Medium-chain alcohol dehydrogenases, catalytic domain"/>
    <property type="match status" value="1"/>
</dbReference>
<dbReference type="Gene3D" id="3.40.50.720">
    <property type="entry name" value="NAD(P)-binding Rossmann-like Domain"/>
    <property type="match status" value="1"/>
</dbReference>
<dbReference type="InterPro" id="IPR013149">
    <property type="entry name" value="ADH-like_C"/>
</dbReference>
<dbReference type="InterPro" id="IPR013154">
    <property type="entry name" value="ADH-like_N"/>
</dbReference>
<dbReference type="InterPro" id="IPR002328">
    <property type="entry name" value="ADH_Zn_CS"/>
</dbReference>
<dbReference type="InterPro" id="IPR011032">
    <property type="entry name" value="GroES-like_sf"/>
</dbReference>
<dbReference type="InterPro" id="IPR036291">
    <property type="entry name" value="NAD(P)-bd_dom_sf"/>
</dbReference>
<dbReference type="InterPro" id="IPR020843">
    <property type="entry name" value="PKS_ER"/>
</dbReference>
<dbReference type="PANTHER" id="PTHR43880">
    <property type="entry name" value="ALCOHOL DEHYDROGENASE"/>
    <property type="match status" value="1"/>
</dbReference>
<dbReference type="PANTHER" id="PTHR43880:SF14">
    <property type="entry name" value="ALL-TRANS-RETINOL DEHYDROGENASE [NAD(+)] ADH4"/>
    <property type="match status" value="1"/>
</dbReference>
<dbReference type="Pfam" id="PF08240">
    <property type="entry name" value="ADH_N"/>
    <property type="match status" value="1"/>
</dbReference>
<dbReference type="Pfam" id="PF00107">
    <property type="entry name" value="ADH_zinc_N"/>
    <property type="match status" value="1"/>
</dbReference>
<dbReference type="SMART" id="SM00829">
    <property type="entry name" value="PKS_ER"/>
    <property type="match status" value="1"/>
</dbReference>
<dbReference type="SUPFAM" id="SSF50129">
    <property type="entry name" value="GroES-like"/>
    <property type="match status" value="2"/>
</dbReference>
<dbReference type="SUPFAM" id="SSF51735">
    <property type="entry name" value="NAD(P)-binding Rossmann-fold domains"/>
    <property type="match status" value="1"/>
</dbReference>
<dbReference type="PROSITE" id="PS00059">
    <property type="entry name" value="ADH_ZINC"/>
    <property type="match status" value="1"/>
</dbReference>
<feature type="chain" id="PRO_0000160683" description="All-trans-retinol dehydrogenase [NAD(+)] ADH4">
    <location>
        <begin position="1"/>
        <end position="377"/>
    </location>
</feature>
<feature type="binding site" evidence="1">
    <location>
        <position position="47"/>
    </location>
    <ligand>
        <name>Zn(2+)</name>
        <dbReference type="ChEBI" id="CHEBI:29105"/>
        <label>1</label>
        <note>catalytic</note>
    </ligand>
</feature>
<feature type="binding site" evidence="1">
    <location>
        <begin position="48"/>
        <end position="49"/>
    </location>
    <ligand>
        <name>NAD(+)</name>
        <dbReference type="ChEBI" id="CHEBI:57540"/>
    </ligand>
</feature>
<feature type="binding site" evidence="1">
    <location>
        <position position="68"/>
    </location>
    <ligand>
        <name>Zn(2+)</name>
        <dbReference type="ChEBI" id="CHEBI:29105"/>
        <label>1</label>
        <note>catalytic</note>
    </ligand>
</feature>
<feature type="binding site" evidence="1">
    <location>
        <position position="98"/>
    </location>
    <ligand>
        <name>Zn(2+)</name>
        <dbReference type="ChEBI" id="CHEBI:29105"/>
        <label>2</label>
    </ligand>
</feature>
<feature type="binding site" evidence="1">
    <location>
        <position position="101"/>
    </location>
    <ligand>
        <name>Zn(2+)</name>
        <dbReference type="ChEBI" id="CHEBI:29105"/>
        <label>2</label>
    </ligand>
</feature>
<feature type="binding site" evidence="1">
    <location>
        <position position="104"/>
    </location>
    <ligand>
        <name>Zn(2+)</name>
        <dbReference type="ChEBI" id="CHEBI:29105"/>
        <label>2</label>
    </ligand>
</feature>
<feature type="binding site" evidence="1">
    <location>
        <position position="112"/>
    </location>
    <ligand>
        <name>Zn(2+)</name>
        <dbReference type="ChEBI" id="CHEBI:29105"/>
        <label>2</label>
    </ligand>
</feature>
<feature type="binding site" evidence="1">
    <location>
        <position position="179"/>
    </location>
    <ligand>
        <name>Zn(2+)</name>
        <dbReference type="ChEBI" id="CHEBI:29105"/>
        <label>1</label>
        <note>catalytic</note>
    </ligand>
</feature>
<feature type="binding site" evidence="1">
    <location>
        <begin position="204"/>
        <end position="209"/>
    </location>
    <ligand>
        <name>NAD(+)</name>
        <dbReference type="ChEBI" id="CHEBI:57540"/>
    </ligand>
</feature>
<feature type="binding site" evidence="1">
    <location>
        <position position="228"/>
    </location>
    <ligand>
        <name>NAD(+)</name>
        <dbReference type="ChEBI" id="CHEBI:57540"/>
    </ligand>
</feature>
<feature type="binding site" evidence="1">
    <location>
        <position position="233"/>
    </location>
    <ligand>
        <name>NAD(+)</name>
        <dbReference type="ChEBI" id="CHEBI:57540"/>
    </ligand>
</feature>
<feature type="binding site" evidence="1">
    <location>
        <begin position="297"/>
        <end position="299"/>
    </location>
    <ligand>
        <name>NAD(+)</name>
        <dbReference type="ChEBI" id="CHEBI:57540"/>
    </ligand>
</feature>
<feature type="binding site" evidence="1">
    <location>
        <begin position="320"/>
        <end position="322"/>
    </location>
    <ligand>
        <name>NAD(+)</name>
        <dbReference type="ChEBI" id="CHEBI:57540"/>
    </ligand>
</feature>
<feature type="binding site" evidence="1">
    <location>
        <position position="372"/>
    </location>
    <ligand>
        <name>NAD(+)</name>
        <dbReference type="ChEBI" id="CHEBI:57540"/>
    </ligand>
</feature>
<protein>
    <recommendedName>
        <fullName evidence="6">All-trans-retinol dehydrogenase [NAD(+)] ADH4</fullName>
        <ecNumber evidence="4">1.1.1.105</ecNumber>
    </recommendedName>
    <alternativeName>
        <fullName evidence="5">Alcohol dehydrogenase 2</fullName>
    </alternativeName>
    <alternativeName>
        <fullName>Alcohol dehydrogenase 4</fullName>
    </alternativeName>
    <alternativeName>
        <fullName>Alcohol dehydrogenase class II</fullName>
        <shortName>Alcohol dehydrogenase II</shortName>
    </alternativeName>
</protein>
<sequence length="377" mass="40277">MGTQGKVITCKAAIAWKTDSPLCIEEIEVSPPKAHEVRIKVIATCVCPTDINATNPKKKALFPVVLGHECAGIVESVGPGVTNFKPGDKVIPFFAPQCKKCKLCLSPLTNLCGKLRNFKYPTIDQELMEDRTSRFTSKERSIYHFMGVSSFSQYTVVSEANLARVDDEANLERVCLIGCGFTSGYGAAINTAKVTPGSACAVFGLGCVGLSAVIGCKIAGASRIIAIDINSEKFPKAKALGATDCLNPRDLDKPVQDVITELTGGGVDFSLDCAGTAQTLKAAVDCTVVGWGSCTVVGAKVDEMNISTVDMILGRSVKGTFFGGWKSVDSVPNLVTDYKNKKFDLDLLVTHALPFDKINDAIDLMNQGKSIRTILTF</sequence>
<comment type="function">
    <text evidence="2 4">Catalyzes the NAD-dependent oxidation of either all-trans-retinol or 9-cis-retinol (PubMed:17279314). Also oxidizes long chain omega-hydroxy fatty acids, such as 20-HETE, producing both the intermediate aldehyde, 20-oxoarachidonate and the end product, a dicarboxylic acid, (5Z,8Z,11Z,14Z)-eicosatetraenedioate (By similarity). Also catalyzes the reduction of benzoquinones (By similarity).</text>
</comment>
<comment type="catalytic activity">
    <reaction evidence="4">
        <text>all-trans-retinol + NAD(+) = all-trans-retinal + NADH + H(+)</text>
        <dbReference type="Rhea" id="RHEA:21284"/>
        <dbReference type="ChEBI" id="CHEBI:15378"/>
        <dbReference type="ChEBI" id="CHEBI:17336"/>
        <dbReference type="ChEBI" id="CHEBI:17898"/>
        <dbReference type="ChEBI" id="CHEBI:57540"/>
        <dbReference type="ChEBI" id="CHEBI:57945"/>
        <dbReference type="EC" id="1.1.1.105"/>
    </reaction>
    <physiologicalReaction direction="left-to-right" evidence="7">
        <dbReference type="Rhea" id="RHEA:21285"/>
    </physiologicalReaction>
</comment>
<comment type="catalytic activity">
    <reaction evidence="4">
        <text>9-cis-retinol + NAD(+) = 9-cis-retinal + NADH + H(+)</text>
        <dbReference type="Rhea" id="RHEA:42052"/>
        <dbReference type="ChEBI" id="CHEBI:15378"/>
        <dbReference type="ChEBI" id="CHEBI:57540"/>
        <dbReference type="ChEBI" id="CHEBI:57945"/>
        <dbReference type="ChEBI" id="CHEBI:78272"/>
        <dbReference type="ChEBI" id="CHEBI:78273"/>
    </reaction>
    <physiologicalReaction direction="left-to-right" evidence="7">
        <dbReference type="Rhea" id="RHEA:42053"/>
    </physiologicalReaction>
</comment>
<comment type="catalytic activity">
    <reaction evidence="3">
        <text>20-oxo-(5Z,8Z,11Z,14Z)-eicosatetraenoate + NAD(+) + H2O = (5Z,8Z,11Z,14Z)-eicosatetraenedioate + NADH + 2 H(+)</text>
        <dbReference type="Rhea" id="RHEA:39803"/>
        <dbReference type="ChEBI" id="CHEBI:15377"/>
        <dbReference type="ChEBI" id="CHEBI:15378"/>
        <dbReference type="ChEBI" id="CHEBI:57540"/>
        <dbReference type="ChEBI" id="CHEBI:57945"/>
        <dbReference type="ChEBI" id="CHEBI:76645"/>
        <dbReference type="ChEBI" id="CHEBI:76647"/>
    </reaction>
    <physiologicalReaction direction="left-to-right" evidence="3">
        <dbReference type="Rhea" id="RHEA:39804"/>
    </physiologicalReaction>
</comment>
<comment type="catalytic activity">
    <reaction evidence="3">
        <text>20-hydroxy-(5Z,8Z,11Z,14Z)-eicosatetraenoate + NAD(+) = 20-oxo-(5Z,8Z,11Z,14Z)-eicosatetraenoate + NADH + H(+)</text>
        <dbReference type="Rhea" id="RHEA:39799"/>
        <dbReference type="ChEBI" id="CHEBI:15378"/>
        <dbReference type="ChEBI" id="CHEBI:57540"/>
        <dbReference type="ChEBI" id="CHEBI:57945"/>
        <dbReference type="ChEBI" id="CHEBI:76624"/>
        <dbReference type="ChEBI" id="CHEBI:76645"/>
    </reaction>
    <physiologicalReaction direction="left-to-right" evidence="3">
        <dbReference type="Rhea" id="RHEA:39800"/>
    </physiologicalReaction>
</comment>
<comment type="catalytic activity">
    <reaction evidence="3">
        <text>1,4-benzoquinone + NADH + H(+) = hydroquinone + NAD(+)</text>
        <dbReference type="Rhea" id="RHEA:60660"/>
        <dbReference type="ChEBI" id="CHEBI:15378"/>
        <dbReference type="ChEBI" id="CHEBI:16509"/>
        <dbReference type="ChEBI" id="CHEBI:17594"/>
        <dbReference type="ChEBI" id="CHEBI:57540"/>
        <dbReference type="ChEBI" id="CHEBI:57945"/>
    </reaction>
    <physiologicalReaction direction="left-to-right" evidence="3">
        <dbReference type="Rhea" id="RHEA:60661"/>
    </physiologicalReaction>
</comment>
<comment type="cofactor">
    <cofactor evidence="1">
        <name>Zn(2+)</name>
        <dbReference type="ChEBI" id="CHEBI:29105"/>
    </cofactor>
    <text evidence="1">Binds 2 Zn(2+) ions per subunit.</text>
</comment>
<comment type="activity regulation">
    <text evidence="3">Oxidation of 20-HETE is inhibited by low concentrations of N-heptylformamide. Oxidation of 20-HETE is a decreased by 55-65% by either all-trans-retinol or all-trans-retinoic acid. Strongly inhibited by omega-hydroxy fatty acids.</text>
</comment>
<comment type="subunit">
    <text>Dimer.</text>
</comment>
<comment type="subcellular location">
    <subcellularLocation>
        <location evidence="1">Cytoplasm</location>
    </subcellularLocation>
</comment>
<comment type="tissue specificity">
    <text>Liver specific.</text>
</comment>
<comment type="similarity">
    <text evidence="6">Belongs to the zinc-containing alcohol dehydrogenase family. Class-II subfamily.</text>
</comment>
<comment type="caution">
    <text evidence="4">Has a much lower NAD-retinol dehydrogenase activity compared to the human ortholog.</text>
</comment>
<name>ADH4_RAT</name>
<gene>
    <name evidence="8" type="primary">Adh4</name>
    <name evidence="5" type="synonym">Adh2</name>
</gene>
<evidence type="ECO:0000250" key="1"/>
<evidence type="ECO:0000250" key="2">
    <source>
        <dbReference type="UniProtKB" id="P08319"/>
    </source>
</evidence>
<evidence type="ECO:0000250" key="3">
    <source>
        <dbReference type="UniProtKB" id="Q9QYY9"/>
    </source>
</evidence>
<evidence type="ECO:0000269" key="4">
    <source>
    </source>
</evidence>
<evidence type="ECO:0000303" key="5">
    <source>
    </source>
</evidence>
<evidence type="ECO:0000305" key="6"/>
<evidence type="ECO:0000305" key="7">
    <source>
    </source>
</evidence>
<evidence type="ECO:0000312" key="8">
    <source>
        <dbReference type="RGD" id="71028"/>
    </source>
</evidence>
<keyword id="KW-0963">Cytoplasm</keyword>
<keyword id="KW-0443">Lipid metabolism</keyword>
<keyword id="KW-0479">Metal-binding</keyword>
<keyword id="KW-0520">NAD</keyword>
<keyword id="KW-0560">Oxidoreductase</keyword>
<keyword id="KW-1185">Reference proteome</keyword>
<keyword id="KW-0862">Zinc</keyword>
<proteinExistence type="evidence at protein level"/>
<reference key="1">
    <citation type="journal article" date="1995" name="FEBS Lett.">
        <title>Cloning and characterization of a novel rat alcohol dehydrogenase of class II type.</title>
        <authorList>
            <person name="Hoeoeg J.-O."/>
        </authorList>
    </citation>
    <scope>NUCLEOTIDE SEQUENCE [MRNA]</scope>
    <source>
        <strain>Sprague-Dawley</strain>
        <tissue>Liver</tissue>
    </source>
</reference>
<reference key="2">
    <citation type="journal article" date="2007" name="Cell. Mol. Life Sci.">
        <title>Alcohol dehydrogenase 2 is a major hepatic enzyme for human retinol metabolism.</title>
        <authorList>
            <person name="Hellgren M."/>
            <person name="Stroemberg P."/>
            <person name="Gallego O."/>
            <person name="Martras S."/>
            <person name="Farres J."/>
            <person name="Persson B."/>
            <person name="Pares X."/>
            <person name="Hoeoeg J.O."/>
        </authorList>
    </citation>
    <scope>FUNCTION</scope>
    <scope>CATALYTIC ACTIVITY</scope>
    <scope>CAUTION</scope>
</reference>
<organism>
    <name type="scientific">Rattus norvegicus</name>
    <name type="common">Rat</name>
    <dbReference type="NCBI Taxonomy" id="10116"/>
    <lineage>
        <taxon>Eukaryota</taxon>
        <taxon>Metazoa</taxon>
        <taxon>Chordata</taxon>
        <taxon>Craniata</taxon>
        <taxon>Vertebrata</taxon>
        <taxon>Euteleostomi</taxon>
        <taxon>Mammalia</taxon>
        <taxon>Eutheria</taxon>
        <taxon>Euarchontoglires</taxon>
        <taxon>Glires</taxon>
        <taxon>Rodentia</taxon>
        <taxon>Myomorpha</taxon>
        <taxon>Muroidea</taxon>
        <taxon>Muridae</taxon>
        <taxon>Murinae</taxon>
        <taxon>Rattus</taxon>
    </lineage>
</organism>
<accession>Q64563</accession>